<feature type="chain" id="PRO_1000060665" description="Integration host factor subunit beta">
    <location>
        <begin position="1"/>
        <end position="94"/>
    </location>
</feature>
<evidence type="ECO:0000255" key="1">
    <source>
        <dbReference type="HAMAP-Rule" id="MF_00381"/>
    </source>
</evidence>
<protein>
    <recommendedName>
        <fullName evidence="1">Integration host factor subunit beta</fullName>
        <shortName evidence="1">IHF-beta</shortName>
    </recommendedName>
</protein>
<gene>
    <name evidence="1" type="primary">ihfB</name>
    <name evidence="1" type="synonym">himD</name>
    <name type="ordered locus">SBO_2200</name>
</gene>
<sequence length="94" mass="10651">MTKSELIERLATQQSHIPAKTVEDAVKEMLEHMASTLAQGERIEIRGFGSFSLHYRAPRTGRNPKTGDKVELEGKYVPHFKPGKELRDRANIYG</sequence>
<dbReference type="EMBL" id="CP000036">
    <property type="protein sequence ID" value="ABB66770.1"/>
    <property type="molecule type" value="Genomic_DNA"/>
</dbReference>
<dbReference type="RefSeq" id="WP_000167336.1">
    <property type="nucleotide sequence ID" value="NC_007613.1"/>
</dbReference>
<dbReference type="SMR" id="Q31YT8"/>
<dbReference type="GeneID" id="93776505"/>
<dbReference type="KEGG" id="sbo:SBO_2200"/>
<dbReference type="HOGENOM" id="CLU_105066_2_0_6"/>
<dbReference type="Proteomes" id="UP000007067">
    <property type="component" value="Chromosome"/>
</dbReference>
<dbReference type="GO" id="GO:0005694">
    <property type="term" value="C:chromosome"/>
    <property type="evidence" value="ECO:0007669"/>
    <property type="project" value="InterPro"/>
</dbReference>
<dbReference type="GO" id="GO:0005829">
    <property type="term" value="C:cytosol"/>
    <property type="evidence" value="ECO:0007669"/>
    <property type="project" value="TreeGrafter"/>
</dbReference>
<dbReference type="GO" id="GO:0003677">
    <property type="term" value="F:DNA binding"/>
    <property type="evidence" value="ECO:0007669"/>
    <property type="project" value="UniProtKB-UniRule"/>
</dbReference>
<dbReference type="GO" id="GO:0030527">
    <property type="term" value="F:structural constituent of chromatin"/>
    <property type="evidence" value="ECO:0007669"/>
    <property type="project" value="InterPro"/>
</dbReference>
<dbReference type="GO" id="GO:0006310">
    <property type="term" value="P:DNA recombination"/>
    <property type="evidence" value="ECO:0007669"/>
    <property type="project" value="UniProtKB-UniRule"/>
</dbReference>
<dbReference type="GO" id="GO:0006355">
    <property type="term" value="P:regulation of DNA-templated transcription"/>
    <property type="evidence" value="ECO:0007669"/>
    <property type="project" value="UniProtKB-UniRule"/>
</dbReference>
<dbReference type="GO" id="GO:0006417">
    <property type="term" value="P:regulation of translation"/>
    <property type="evidence" value="ECO:0007669"/>
    <property type="project" value="UniProtKB-UniRule"/>
</dbReference>
<dbReference type="CDD" id="cd13836">
    <property type="entry name" value="IHF_B"/>
    <property type="match status" value="1"/>
</dbReference>
<dbReference type="FunFam" id="4.10.520.10:FF:000003">
    <property type="entry name" value="Integration host factor subunit beta"/>
    <property type="match status" value="1"/>
</dbReference>
<dbReference type="Gene3D" id="4.10.520.10">
    <property type="entry name" value="IHF-like DNA-binding proteins"/>
    <property type="match status" value="1"/>
</dbReference>
<dbReference type="HAMAP" id="MF_00381">
    <property type="entry name" value="IHF_beta"/>
    <property type="match status" value="1"/>
</dbReference>
<dbReference type="InterPro" id="IPR000119">
    <property type="entry name" value="Hist_DNA-bd"/>
</dbReference>
<dbReference type="InterPro" id="IPR020816">
    <property type="entry name" value="Histone-like_DNA-bd_CS"/>
</dbReference>
<dbReference type="InterPro" id="IPR010992">
    <property type="entry name" value="IHF-like_DNA-bd_dom_sf"/>
</dbReference>
<dbReference type="InterPro" id="IPR005685">
    <property type="entry name" value="IHF_beta"/>
</dbReference>
<dbReference type="NCBIfam" id="TIGR00988">
    <property type="entry name" value="hip"/>
    <property type="match status" value="1"/>
</dbReference>
<dbReference type="NCBIfam" id="NF001222">
    <property type="entry name" value="PRK00199.1"/>
    <property type="match status" value="1"/>
</dbReference>
<dbReference type="PANTHER" id="PTHR33175">
    <property type="entry name" value="DNA-BINDING PROTEIN HU"/>
    <property type="match status" value="1"/>
</dbReference>
<dbReference type="PANTHER" id="PTHR33175:SF5">
    <property type="entry name" value="INTEGRATION HOST FACTOR SUBUNIT BETA"/>
    <property type="match status" value="1"/>
</dbReference>
<dbReference type="Pfam" id="PF00216">
    <property type="entry name" value="Bac_DNA_binding"/>
    <property type="match status" value="1"/>
</dbReference>
<dbReference type="PRINTS" id="PR01727">
    <property type="entry name" value="DNABINDINGHU"/>
</dbReference>
<dbReference type="SMART" id="SM00411">
    <property type="entry name" value="BHL"/>
    <property type="match status" value="1"/>
</dbReference>
<dbReference type="SUPFAM" id="SSF47729">
    <property type="entry name" value="IHF-like DNA-binding proteins"/>
    <property type="match status" value="1"/>
</dbReference>
<dbReference type="PROSITE" id="PS00045">
    <property type="entry name" value="HISTONE_LIKE"/>
    <property type="match status" value="1"/>
</dbReference>
<proteinExistence type="inferred from homology"/>
<keyword id="KW-0233">DNA recombination</keyword>
<keyword id="KW-0238">DNA-binding</keyword>
<keyword id="KW-0804">Transcription</keyword>
<keyword id="KW-0805">Transcription regulation</keyword>
<keyword id="KW-0810">Translation regulation</keyword>
<accession>Q31YT8</accession>
<reference key="1">
    <citation type="journal article" date="2005" name="Nucleic Acids Res.">
        <title>Genome dynamics and diversity of Shigella species, the etiologic agents of bacillary dysentery.</title>
        <authorList>
            <person name="Yang F."/>
            <person name="Yang J."/>
            <person name="Zhang X."/>
            <person name="Chen L."/>
            <person name="Jiang Y."/>
            <person name="Yan Y."/>
            <person name="Tang X."/>
            <person name="Wang J."/>
            <person name="Xiong Z."/>
            <person name="Dong J."/>
            <person name="Xue Y."/>
            <person name="Zhu Y."/>
            <person name="Xu X."/>
            <person name="Sun L."/>
            <person name="Chen S."/>
            <person name="Nie H."/>
            <person name="Peng J."/>
            <person name="Xu J."/>
            <person name="Wang Y."/>
            <person name="Yuan Z."/>
            <person name="Wen Y."/>
            <person name="Yao Z."/>
            <person name="Shen Y."/>
            <person name="Qiang B."/>
            <person name="Hou Y."/>
            <person name="Yu J."/>
            <person name="Jin Q."/>
        </authorList>
    </citation>
    <scope>NUCLEOTIDE SEQUENCE [LARGE SCALE GENOMIC DNA]</scope>
    <source>
        <strain>Sb227</strain>
    </source>
</reference>
<organism>
    <name type="scientific">Shigella boydii serotype 4 (strain Sb227)</name>
    <dbReference type="NCBI Taxonomy" id="300268"/>
    <lineage>
        <taxon>Bacteria</taxon>
        <taxon>Pseudomonadati</taxon>
        <taxon>Pseudomonadota</taxon>
        <taxon>Gammaproteobacteria</taxon>
        <taxon>Enterobacterales</taxon>
        <taxon>Enterobacteriaceae</taxon>
        <taxon>Shigella</taxon>
    </lineage>
</organism>
<name>IHFB_SHIBS</name>
<comment type="function">
    <text evidence="1">This protein is one of the two subunits of integration host factor, a specific DNA-binding protein that functions in genetic recombination as well as in transcriptional and translational control.</text>
</comment>
<comment type="subunit">
    <text evidence="1">Heterodimer of an alpha and a beta chain.</text>
</comment>
<comment type="similarity">
    <text evidence="1">Belongs to the bacterial histone-like protein family.</text>
</comment>